<feature type="chain" id="PRO_0000092171" description="Cytochrome c biogenesis ATP-binding export protein CcmA">
    <location>
        <begin position="1"/>
        <end position="224"/>
    </location>
</feature>
<feature type="domain" description="ABC transporter" evidence="1">
    <location>
        <begin position="1"/>
        <end position="220"/>
    </location>
</feature>
<feature type="binding site" evidence="1">
    <location>
        <begin position="40"/>
        <end position="47"/>
    </location>
    <ligand>
        <name>ATP</name>
        <dbReference type="ChEBI" id="CHEBI:30616"/>
    </ligand>
</feature>
<reference key="1">
    <citation type="journal article" date="2003" name="Nat. Genet.">
        <title>Comparative analysis of the genome sequences of Bordetella pertussis, Bordetella parapertussis and Bordetella bronchiseptica.</title>
        <authorList>
            <person name="Parkhill J."/>
            <person name="Sebaihia M."/>
            <person name="Preston A."/>
            <person name="Murphy L.D."/>
            <person name="Thomson N.R."/>
            <person name="Harris D.E."/>
            <person name="Holden M.T.G."/>
            <person name="Churcher C.M."/>
            <person name="Bentley S.D."/>
            <person name="Mungall K.L."/>
            <person name="Cerdeno-Tarraga A.-M."/>
            <person name="Temple L."/>
            <person name="James K.D."/>
            <person name="Harris B."/>
            <person name="Quail M.A."/>
            <person name="Achtman M."/>
            <person name="Atkin R."/>
            <person name="Baker S."/>
            <person name="Basham D."/>
            <person name="Bason N."/>
            <person name="Cherevach I."/>
            <person name="Chillingworth T."/>
            <person name="Collins M."/>
            <person name="Cronin A."/>
            <person name="Davis P."/>
            <person name="Doggett J."/>
            <person name="Feltwell T."/>
            <person name="Goble A."/>
            <person name="Hamlin N."/>
            <person name="Hauser H."/>
            <person name="Holroyd S."/>
            <person name="Jagels K."/>
            <person name="Leather S."/>
            <person name="Moule S."/>
            <person name="Norberczak H."/>
            <person name="O'Neil S."/>
            <person name="Ormond D."/>
            <person name="Price C."/>
            <person name="Rabbinowitsch E."/>
            <person name="Rutter S."/>
            <person name="Sanders M."/>
            <person name="Saunders D."/>
            <person name="Seeger K."/>
            <person name="Sharp S."/>
            <person name="Simmonds M."/>
            <person name="Skelton J."/>
            <person name="Squares R."/>
            <person name="Squares S."/>
            <person name="Stevens K."/>
            <person name="Unwin L."/>
            <person name="Whitehead S."/>
            <person name="Barrell B.G."/>
            <person name="Maskell D.J."/>
        </authorList>
    </citation>
    <scope>NUCLEOTIDE SEQUENCE [LARGE SCALE GENOMIC DNA]</scope>
    <source>
        <strain>ATCC BAA-588 / NCTC 13252 / RB50</strain>
    </source>
</reference>
<comment type="function">
    <text evidence="1">Part of the ABC transporter complex CcmAB involved in the biogenesis of c-type cytochromes; once thought to export heme, this seems not to be the case, but its exact role is uncertain. Responsible for energy coupling to the transport system.</text>
</comment>
<comment type="catalytic activity">
    <reaction evidence="1">
        <text>heme b(in) + ATP + H2O = heme b(out) + ADP + phosphate + H(+)</text>
        <dbReference type="Rhea" id="RHEA:19261"/>
        <dbReference type="ChEBI" id="CHEBI:15377"/>
        <dbReference type="ChEBI" id="CHEBI:15378"/>
        <dbReference type="ChEBI" id="CHEBI:30616"/>
        <dbReference type="ChEBI" id="CHEBI:43474"/>
        <dbReference type="ChEBI" id="CHEBI:60344"/>
        <dbReference type="ChEBI" id="CHEBI:456216"/>
        <dbReference type="EC" id="7.6.2.5"/>
    </reaction>
</comment>
<comment type="subunit">
    <text evidence="1">The complex is composed of two ATP-binding proteins (CcmA) and two transmembrane proteins (CcmB).</text>
</comment>
<comment type="subcellular location">
    <subcellularLocation>
        <location evidence="1">Cell inner membrane</location>
        <topology evidence="1">Peripheral membrane protein</topology>
    </subcellularLocation>
</comment>
<comment type="similarity">
    <text evidence="1">Belongs to the ABC transporter superfamily. CcmA exporter (TC 3.A.1.107) family.</text>
</comment>
<name>CCMA_BORBR</name>
<evidence type="ECO:0000255" key="1">
    <source>
        <dbReference type="HAMAP-Rule" id="MF_01707"/>
    </source>
</evidence>
<dbReference type="EC" id="7.6.2.5" evidence="1"/>
<dbReference type="EMBL" id="BX640445">
    <property type="protein sequence ID" value="CAE33295.1"/>
    <property type="molecule type" value="Genomic_DNA"/>
</dbReference>
<dbReference type="RefSeq" id="WP_003811421.1">
    <property type="nucleotide sequence ID" value="NC_002927.3"/>
</dbReference>
<dbReference type="SMR" id="Q7WIP8"/>
<dbReference type="KEGG" id="bbr:BB2803"/>
<dbReference type="eggNOG" id="COG4133">
    <property type="taxonomic scope" value="Bacteria"/>
</dbReference>
<dbReference type="HOGENOM" id="CLU_000604_1_2_4"/>
<dbReference type="Proteomes" id="UP000001027">
    <property type="component" value="Chromosome"/>
</dbReference>
<dbReference type="GO" id="GO:0005886">
    <property type="term" value="C:plasma membrane"/>
    <property type="evidence" value="ECO:0007669"/>
    <property type="project" value="UniProtKB-SubCell"/>
</dbReference>
<dbReference type="GO" id="GO:0015439">
    <property type="term" value="F:ABC-type heme transporter activity"/>
    <property type="evidence" value="ECO:0007669"/>
    <property type="project" value="UniProtKB-EC"/>
</dbReference>
<dbReference type="GO" id="GO:0005524">
    <property type="term" value="F:ATP binding"/>
    <property type="evidence" value="ECO:0007669"/>
    <property type="project" value="UniProtKB-KW"/>
</dbReference>
<dbReference type="GO" id="GO:0016887">
    <property type="term" value="F:ATP hydrolysis activity"/>
    <property type="evidence" value="ECO:0007669"/>
    <property type="project" value="InterPro"/>
</dbReference>
<dbReference type="GO" id="GO:0017004">
    <property type="term" value="P:cytochrome complex assembly"/>
    <property type="evidence" value="ECO:0007669"/>
    <property type="project" value="UniProtKB-KW"/>
</dbReference>
<dbReference type="Gene3D" id="3.40.50.300">
    <property type="entry name" value="P-loop containing nucleotide triphosphate hydrolases"/>
    <property type="match status" value="1"/>
</dbReference>
<dbReference type="InterPro" id="IPR003593">
    <property type="entry name" value="AAA+_ATPase"/>
</dbReference>
<dbReference type="InterPro" id="IPR003439">
    <property type="entry name" value="ABC_transporter-like_ATP-bd"/>
</dbReference>
<dbReference type="InterPro" id="IPR005895">
    <property type="entry name" value="ABC_transptr_haem_export_CcmA"/>
</dbReference>
<dbReference type="InterPro" id="IPR027417">
    <property type="entry name" value="P-loop_NTPase"/>
</dbReference>
<dbReference type="NCBIfam" id="TIGR01189">
    <property type="entry name" value="ccmA"/>
    <property type="match status" value="1"/>
</dbReference>
<dbReference type="PANTHER" id="PTHR43499">
    <property type="entry name" value="ABC TRANSPORTER I FAMILY MEMBER 1"/>
    <property type="match status" value="1"/>
</dbReference>
<dbReference type="PANTHER" id="PTHR43499:SF1">
    <property type="entry name" value="ABC TRANSPORTER I FAMILY MEMBER 1"/>
    <property type="match status" value="1"/>
</dbReference>
<dbReference type="Pfam" id="PF00005">
    <property type="entry name" value="ABC_tran"/>
    <property type="match status" value="1"/>
</dbReference>
<dbReference type="SMART" id="SM00382">
    <property type="entry name" value="AAA"/>
    <property type="match status" value="1"/>
</dbReference>
<dbReference type="SUPFAM" id="SSF52540">
    <property type="entry name" value="P-loop containing nucleoside triphosphate hydrolases"/>
    <property type="match status" value="1"/>
</dbReference>
<dbReference type="PROSITE" id="PS50893">
    <property type="entry name" value="ABC_TRANSPORTER_2"/>
    <property type="match status" value="1"/>
</dbReference>
<dbReference type="PROSITE" id="PS51243">
    <property type="entry name" value="CCMA"/>
    <property type="match status" value="1"/>
</dbReference>
<sequence length="224" mass="23709">MQNAEAAPALLAAHGLVGRRGGRRPLDLNLRPGQLVHVRGANGSGKTSLLRTLAGLLRPRRGEVRWNGADIHADLPGYYLHMAYLGHDNGCSDALTARENLRYALHVAGAPRAEPELERALRDWGLAAGADAPAARLSQGQGRRLALARVMLSRKRLWLLDEPDAGLDAASLQRLHGMLDAHLAGGGAAVLASHRGGGAWAGCTQTLELDEYAHAEVVGADCLA</sequence>
<proteinExistence type="inferred from homology"/>
<organism>
    <name type="scientific">Bordetella bronchiseptica (strain ATCC BAA-588 / NCTC 13252 / RB50)</name>
    <name type="common">Alcaligenes bronchisepticus</name>
    <dbReference type="NCBI Taxonomy" id="257310"/>
    <lineage>
        <taxon>Bacteria</taxon>
        <taxon>Pseudomonadati</taxon>
        <taxon>Pseudomonadota</taxon>
        <taxon>Betaproteobacteria</taxon>
        <taxon>Burkholderiales</taxon>
        <taxon>Alcaligenaceae</taxon>
        <taxon>Bordetella</taxon>
    </lineage>
</organism>
<keyword id="KW-0067">ATP-binding</keyword>
<keyword id="KW-0997">Cell inner membrane</keyword>
<keyword id="KW-1003">Cell membrane</keyword>
<keyword id="KW-0201">Cytochrome c-type biogenesis</keyword>
<keyword id="KW-0472">Membrane</keyword>
<keyword id="KW-0547">Nucleotide-binding</keyword>
<keyword id="KW-1278">Translocase</keyword>
<keyword id="KW-0813">Transport</keyword>
<accession>Q7WIP8</accession>
<gene>
    <name evidence="1" type="primary">ccmA</name>
    <name type="ordered locus">BB2803</name>
</gene>
<protein>
    <recommendedName>
        <fullName evidence="1">Cytochrome c biogenesis ATP-binding export protein CcmA</fullName>
        <ecNumber evidence="1">7.6.2.5</ecNumber>
    </recommendedName>
    <alternativeName>
        <fullName evidence="1">Heme exporter protein A</fullName>
    </alternativeName>
</protein>